<sequence>MTAHRSVLLVVHTGRDEATETARRVEKVLGDNKIALRVLSAEAVDRGSLHLAPDDMRAMGVEIEVVDADQHAADGCELVLVLGGDGTFLRAAELARNASIPVLGVNLGRIGFLAEAEAEAIDAVLEHVVAQDYRVEDRLTLDVVVRQGGRIVNRGWALNEVSLEKGPRLGVLGVVVEIDGRPVSAFGCDGVLVSTPTGSTAYAFSAGGPVLWPDLEAILVVPNNAHALFGRPMVTSPEATIAIEIEADGHDALVFCDGRREMLIPAGSRLEVTRCVTSVKWARLDSAPFTDRLVRKFRLPVTGWRGK</sequence>
<organism>
    <name type="scientific">Mycobacterium bovis (strain ATCC BAA-935 / AF2122/97)</name>
    <dbReference type="NCBI Taxonomy" id="233413"/>
    <lineage>
        <taxon>Bacteria</taxon>
        <taxon>Bacillati</taxon>
        <taxon>Actinomycetota</taxon>
        <taxon>Actinomycetes</taxon>
        <taxon>Mycobacteriales</taxon>
        <taxon>Mycobacteriaceae</taxon>
        <taxon>Mycobacterium</taxon>
        <taxon>Mycobacterium tuberculosis complex</taxon>
    </lineage>
</organism>
<comment type="function">
    <text evidence="1">Involved in the regulation of the intracellular balance of NAD and NADP, and is a key enzyme in the biosynthesis of NADP. Catalyzes specifically the phosphorylation on 2'-hydroxyl of the adenosine moiety of NAD to yield NADP.</text>
</comment>
<comment type="catalytic activity">
    <reaction evidence="1">
        <text>NAD(+) + ATP = ADP + NADP(+) + H(+)</text>
        <dbReference type="Rhea" id="RHEA:18629"/>
        <dbReference type="ChEBI" id="CHEBI:15378"/>
        <dbReference type="ChEBI" id="CHEBI:30616"/>
        <dbReference type="ChEBI" id="CHEBI:57540"/>
        <dbReference type="ChEBI" id="CHEBI:58349"/>
        <dbReference type="ChEBI" id="CHEBI:456216"/>
        <dbReference type="EC" id="2.7.1.23"/>
    </reaction>
</comment>
<comment type="cofactor">
    <cofactor evidence="1">
        <name>a divalent metal cation</name>
        <dbReference type="ChEBI" id="CHEBI:60240"/>
    </cofactor>
</comment>
<comment type="subcellular location">
    <subcellularLocation>
        <location evidence="1">Cytoplasm</location>
    </subcellularLocation>
</comment>
<comment type="similarity">
    <text evidence="1">Belongs to the NAD kinase family.</text>
</comment>
<name>NADK_MYCBO</name>
<keyword id="KW-0067">ATP-binding</keyword>
<keyword id="KW-0963">Cytoplasm</keyword>
<keyword id="KW-0418">Kinase</keyword>
<keyword id="KW-0520">NAD</keyword>
<keyword id="KW-0521">NADP</keyword>
<keyword id="KW-0547">Nucleotide-binding</keyword>
<keyword id="KW-1185">Reference proteome</keyword>
<keyword id="KW-0808">Transferase</keyword>
<reference key="1">
    <citation type="journal article" date="2003" name="Proc. Natl. Acad. Sci. U.S.A.">
        <title>The complete genome sequence of Mycobacterium bovis.</title>
        <authorList>
            <person name="Garnier T."/>
            <person name="Eiglmeier K."/>
            <person name="Camus J.-C."/>
            <person name="Medina N."/>
            <person name="Mansoor H."/>
            <person name="Pryor M."/>
            <person name="Duthoy S."/>
            <person name="Grondin S."/>
            <person name="Lacroix C."/>
            <person name="Monsempe C."/>
            <person name="Simon S."/>
            <person name="Harris B."/>
            <person name="Atkin R."/>
            <person name="Doggett J."/>
            <person name="Mayes R."/>
            <person name="Keating L."/>
            <person name="Wheeler P.R."/>
            <person name="Parkhill J."/>
            <person name="Barrell B.G."/>
            <person name="Cole S.T."/>
            <person name="Gordon S.V."/>
            <person name="Hewinson R.G."/>
        </authorList>
    </citation>
    <scope>NUCLEOTIDE SEQUENCE [LARGE SCALE GENOMIC DNA]</scope>
    <source>
        <strain>ATCC BAA-935 / AF2122/97</strain>
    </source>
</reference>
<reference key="2">
    <citation type="journal article" date="2017" name="Genome Announc.">
        <title>Updated reference genome sequence and annotation of Mycobacterium bovis AF2122/97.</title>
        <authorList>
            <person name="Malone K.M."/>
            <person name="Farrell D."/>
            <person name="Stuber T.P."/>
            <person name="Schubert O.T."/>
            <person name="Aebersold R."/>
            <person name="Robbe-Austerman S."/>
            <person name="Gordon S.V."/>
        </authorList>
    </citation>
    <scope>NUCLEOTIDE SEQUENCE [LARGE SCALE GENOMIC DNA]</scope>
    <scope>GENOME REANNOTATION</scope>
    <source>
        <strain>ATCC BAA-935 / AF2122/97</strain>
    </source>
</reference>
<proteinExistence type="inferred from homology"/>
<dbReference type="EC" id="2.7.1.23" evidence="1"/>
<dbReference type="EMBL" id="LT708304">
    <property type="protein sequence ID" value="SIU00325.1"/>
    <property type="molecule type" value="Genomic_DNA"/>
</dbReference>
<dbReference type="RefSeq" id="NP_855374.1">
    <property type="nucleotide sequence ID" value="NC_002945.3"/>
</dbReference>
<dbReference type="RefSeq" id="WP_003408383.1">
    <property type="nucleotide sequence ID" value="NC_002945.4"/>
</dbReference>
<dbReference type="SMR" id="P0A5S7"/>
<dbReference type="KEGG" id="mbo:BQ2027_MB1721"/>
<dbReference type="PATRIC" id="fig|233413.5.peg.1877"/>
<dbReference type="Proteomes" id="UP000001419">
    <property type="component" value="Chromosome"/>
</dbReference>
<dbReference type="GO" id="GO:0005737">
    <property type="term" value="C:cytoplasm"/>
    <property type="evidence" value="ECO:0007669"/>
    <property type="project" value="UniProtKB-SubCell"/>
</dbReference>
<dbReference type="GO" id="GO:0005524">
    <property type="term" value="F:ATP binding"/>
    <property type="evidence" value="ECO:0007669"/>
    <property type="project" value="UniProtKB-KW"/>
</dbReference>
<dbReference type="GO" id="GO:0046872">
    <property type="term" value="F:metal ion binding"/>
    <property type="evidence" value="ECO:0007669"/>
    <property type="project" value="UniProtKB-UniRule"/>
</dbReference>
<dbReference type="GO" id="GO:0051287">
    <property type="term" value="F:NAD binding"/>
    <property type="evidence" value="ECO:0007669"/>
    <property type="project" value="UniProtKB-ARBA"/>
</dbReference>
<dbReference type="GO" id="GO:0003951">
    <property type="term" value="F:NAD+ kinase activity"/>
    <property type="evidence" value="ECO:0007669"/>
    <property type="project" value="UniProtKB-UniRule"/>
</dbReference>
<dbReference type="GO" id="GO:0019674">
    <property type="term" value="P:NAD metabolic process"/>
    <property type="evidence" value="ECO:0007669"/>
    <property type="project" value="InterPro"/>
</dbReference>
<dbReference type="GO" id="GO:0006741">
    <property type="term" value="P:NADP biosynthetic process"/>
    <property type="evidence" value="ECO:0007669"/>
    <property type="project" value="UniProtKB-UniRule"/>
</dbReference>
<dbReference type="FunFam" id="2.60.200.30:FF:000007">
    <property type="entry name" value="NAD kinase"/>
    <property type="match status" value="1"/>
</dbReference>
<dbReference type="Gene3D" id="3.40.50.10330">
    <property type="entry name" value="Probable inorganic polyphosphate/atp-NAD kinase, domain 1"/>
    <property type="match status" value="1"/>
</dbReference>
<dbReference type="Gene3D" id="2.60.200.30">
    <property type="entry name" value="Probable inorganic polyphosphate/atp-NAD kinase, domain 2"/>
    <property type="match status" value="1"/>
</dbReference>
<dbReference type="HAMAP" id="MF_00361">
    <property type="entry name" value="NAD_kinase"/>
    <property type="match status" value="1"/>
</dbReference>
<dbReference type="InterPro" id="IPR017438">
    <property type="entry name" value="ATP-NAD_kinase_N"/>
</dbReference>
<dbReference type="InterPro" id="IPR017437">
    <property type="entry name" value="ATP-NAD_kinase_PpnK-typ_C"/>
</dbReference>
<dbReference type="InterPro" id="IPR016064">
    <property type="entry name" value="NAD/diacylglycerol_kinase_sf"/>
</dbReference>
<dbReference type="InterPro" id="IPR002504">
    <property type="entry name" value="NADK"/>
</dbReference>
<dbReference type="NCBIfam" id="NF002892">
    <property type="entry name" value="PRK03372.1"/>
    <property type="match status" value="1"/>
</dbReference>
<dbReference type="PANTHER" id="PTHR20275">
    <property type="entry name" value="NAD KINASE"/>
    <property type="match status" value="1"/>
</dbReference>
<dbReference type="PANTHER" id="PTHR20275:SF0">
    <property type="entry name" value="NAD KINASE"/>
    <property type="match status" value="1"/>
</dbReference>
<dbReference type="Pfam" id="PF01513">
    <property type="entry name" value="NAD_kinase"/>
    <property type="match status" value="1"/>
</dbReference>
<dbReference type="Pfam" id="PF20143">
    <property type="entry name" value="NAD_kinase_C"/>
    <property type="match status" value="1"/>
</dbReference>
<dbReference type="SUPFAM" id="SSF111331">
    <property type="entry name" value="NAD kinase/diacylglycerol kinase-like"/>
    <property type="match status" value="1"/>
</dbReference>
<accession>P0A5S7</accession>
<accession>A0A1R3XZ25</accession>
<accession>O33196</accession>
<accession>X2BIZ9</accession>
<protein>
    <recommendedName>
        <fullName evidence="1">NAD kinase</fullName>
        <ecNumber evidence="1">2.7.1.23</ecNumber>
    </recommendedName>
    <alternativeName>
        <fullName evidence="1">ATP-dependent NAD kinase</fullName>
    </alternativeName>
</protein>
<feature type="chain" id="PRO_0000120636" description="NAD kinase">
    <location>
        <begin position="1"/>
        <end position="307"/>
    </location>
</feature>
<feature type="active site" description="Proton acceptor" evidence="1">
    <location>
        <position position="85"/>
    </location>
</feature>
<feature type="binding site" evidence="1">
    <location>
        <begin position="85"/>
        <end position="86"/>
    </location>
    <ligand>
        <name>NAD(+)</name>
        <dbReference type="ChEBI" id="CHEBI:57540"/>
    </ligand>
</feature>
<feature type="binding site" evidence="1">
    <location>
        <position position="90"/>
    </location>
    <ligand>
        <name>NAD(+)</name>
        <dbReference type="ChEBI" id="CHEBI:57540"/>
    </ligand>
</feature>
<feature type="binding site" evidence="1">
    <location>
        <begin position="159"/>
        <end position="160"/>
    </location>
    <ligand>
        <name>NAD(+)</name>
        <dbReference type="ChEBI" id="CHEBI:57540"/>
    </ligand>
</feature>
<feature type="binding site" evidence="1">
    <location>
        <position position="189"/>
    </location>
    <ligand>
        <name>NAD(+)</name>
        <dbReference type="ChEBI" id="CHEBI:57540"/>
    </ligand>
</feature>
<feature type="binding site" evidence="1">
    <location>
        <begin position="200"/>
        <end position="205"/>
    </location>
    <ligand>
        <name>NAD(+)</name>
        <dbReference type="ChEBI" id="CHEBI:57540"/>
    </ligand>
</feature>
<gene>
    <name evidence="1" type="primary">nadK</name>
    <name type="ordered locus">BQ2027_MB1721</name>
</gene>
<evidence type="ECO:0000255" key="1">
    <source>
        <dbReference type="HAMAP-Rule" id="MF_00361"/>
    </source>
</evidence>